<name>ALKB6_HUMAN</name>
<protein>
    <recommendedName>
        <fullName evidence="10">Probable RNA/DNA demethylase ALKBH6</fullName>
        <ecNumber evidence="6">1.14.11.-</ecNumber>
    </recommendedName>
    <alternativeName>
        <fullName>Alkylated DNA repair protein alkB homolog 6</fullName>
    </alternativeName>
    <alternativeName>
        <fullName>Alpha-ketoglutarate-dependent dioxygenase alkB homolog 6</fullName>
    </alternativeName>
    <alternativeName>
        <fullName>Probable nucleic acid dioxygenase ALKBH6</fullName>
    </alternativeName>
</protein>
<sequence>MEEQDARVPALEPFRVEQAPPVIYYVPDFISKEEEEYLLRQVFNAPKPKWTQLSGRKLQNWGGLPHPRGMVPERLPPWLQRYVDKVSNLSLFGGLPANHVLVNQYLPGEGIMPHEDGPLYYPTVSTISLGSHTVLDFYEPRRPEDDDPTEQPRPPPRPTTSLLLEPRSLLVLRGPAYTRLLHGIAAARVDALDAASSPPNAAACPSARPGACLVRGTRVSLTIRRVPRVLRAGLLLGK</sequence>
<proteinExistence type="evidence at protein level"/>
<gene>
    <name evidence="12" type="primary">ALKBH6</name>
    <name evidence="9" type="synonym">ABH6</name>
</gene>
<accession>Q3KRA9</accession>
<accession>A5LGM8</accession>
<accession>A6NLP1</accession>
<accession>A8MU96</accession>
<dbReference type="EC" id="1.14.11.-" evidence="6"/>
<dbReference type="EMBL" id="AB273714">
    <property type="protein sequence ID" value="BAF63844.1"/>
    <property type="molecule type" value="mRNA"/>
</dbReference>
<dbReference type="EMBL" id="AF038458">
    <property type="status" value="NOT_ANNOTATED_CDS"/>
    <property type="molecule type" value="Genomic_DNA"/>
</dbReference>
<dbReference type="EMBL" id="AK310704">
    <property type="status" value="NOT_ANNOTATED_CDS"/>
    <property type="molecule type" value="mRNA"/>
</dbReference>
<dbReference type="EMBL" id="BC105801">
    <property type="protein sequence ID" value="AAI05802.1"/>
    <property type="status" value="ALT_INIT"/>
    <property type="molecule type" value="mRNA"/>
</dbReference>
<dbReference type="CCDS" id="CCDS74342.1">
    <molecule id="Q3KRA9-1"/>
</dbReference>
<dbReference type="RefSeq" id="NP_001284630.1">
    <molecule id="Q3KRA9-1"/>
    <property type="nucleotide sequence ID" value="NM_001297701.2"/>
</dbReference>
<dbReference type="RefSeq" id="NP_001372984.1">
    <molecule id="Q3KRA9-1"/>
    <property type="nucleotide sequence ID" value="NM_001386055.1"/>
</dbReference>
<dbReference type="RefSeq" id="NP_116267.3">
    <molecule id="Q3KRA9-1"/>
    <property type="nucleotide sequence ID" value="NM_032878.3"/>
</dbReference>
<dbReference type="RefSeq" id="XP_005259414.1">
    <property type="nucleotide sequence ID" value="XM_005259357.4"/>
</dbReference>
<dbReference type="RefSeq" id="XP_047295523.1">
    <molecule id="Q3KRA9-3"/>
    <property type="nucleotide sequence ID" value="XM_047439567.1"/>
</dbReference>
<dbReference type="RefSeq" id="XP_054178416.1">
    <molecule id="Q3KRA9-3"/>
    <property type="nucleotide sequence ID" value="XM_054322441.1"/>
</dbReference>
<dbReference type="PDB" id="7VJS">
    <property type="method" value="X-ray"/>
    <property type="resolution" value="1.79 A"/>
    <property type="chains" value="A=1-238"/>
</dbReference>
<dbReference type="PDB" id="7VJV">
    <property type="method" value="X-ray"/>
    <property type="resolution" value="1.75 A"/>
    <property type="chains" value="A=1-238"/>
</dbReference>
<dbReference type="PDBsum" id="7VJS"/>
<dbReference type="PDBsum" id="7VJV"/>
<dbReference type="SMR" id="Q3KRA9"/>
<dbReference type="BioGRID" id="124395">
    <property type="interactions" value="2"/>
</dbReference>
<dbReference type="FunCoup" id="Q3KRA9">
    <property type="interactions" value="806"/>
</dbReference>
<dbReference type="IntAct" id="Q3KRA9">
    <property type="interactions" value="1"/>
</dbReference>
<dbReference type="STRING" id="9606.ENSP00000368152"/>
<dbReference type="GlyGen" id="Q3KRA9">
    <property type="glycosylation" value="1 site"/>
</dbReference>
<dbReference type="iPTMnet" id="Q3KRA9"/>
<dbReference type="PhosphoSitePlus" id="Q3KRA9"/>
<dbReference type="BioMuta" id="ALKBH6"/>
<dbReference type="DMDM" id="172046713"/>
<dbReference type="jPOST" id="Q3KRA9"/>
<dbReference type="MassIVE" id="Q3KRA9"/>
<dbReference type="PaxDb" id="9606-ENSP00000368152"/>
<dbReference type="PeptideAtlas" id="Q3KRA9"/>
<dbReference type="ProteomicsDB" id="61741">
    <molecule id="Q3KRA9-1"/>
</dbReference>
<dbReference type="ProteomicsDB" id="61742">
    <molecule id="Q3KRA9-2"/>
</dbReference>
<dbReference type="ProteomicsDB" id="61743">
    <molecule id="Q3KRA9-3"/>
</dbReference>
<dbReference type="Pumba" id="Q3KRA9"/>
<dbReference type="Antibodypedia" id="68413">
    <property type="antibodies" value="75 antibodies from 16 providers"/>
</dbReference>
<dbReference type="DNASU" id="84964"/>
<dbReference type="Ensembl" id="ENST00000252984.11">
    <molecule id="Q3KRA9-1"/>
    <property type="protein sequence ID" value="ENSP00000252984.6"/>
    <property type="gene ID" value="ENSG00000239382.11"/>
</dbReference>
<dbReference type="Ensembl" id="ENST00000378875.8">
    <molecule id="Q3KRA9-1"/>
    <property type="protein sequence ID" value="ENSP00000368152.4"/>
    <property type="gene ID" value="ENSG00000239382.11"/>
</dbReference>
<dbReference type="GeneID" id="84964"/>
<dbReference type="KEGG" id="hsa:84964"/>
<dbReference type="MANE-Select" id="ENST00000378875.8">
    <property type="protein sequence ID" value="ENSP00000368152.4"/>
    <property type="RefSeq nucleotide sequence ID" value="NM_032878.5"/>
    <property type="RefSeq protein sequence ID" value="NP_116267.4"/>
</dbReference>
<dbReference type="UCSC" id="uc002ocv.2">
    <molecule id="Q3KRA9-1"/>
    <property type="organism name" value="human"/>
</dbReference>
<dbReference type="AGR" id="HGNC:28243"/>
<dbReference type="CTD" id="84964"/>
<dbReference type="DisGeNET" id="84964"/>
<dbReference type="GeneCards" id="ALKBH6"/>
<dbReference type="HGNC" id="HGNC:28243">
    <property type="gene designation" value="ALKBH6"/>
</dbReference>
<dbReference type="HPA" id="ENSG00000239382">
    <property type="expression patterns" value="Low tissue specificity"/>
</dbReference>
<dbReference type="MIM" id="613304">
    <property type="type" value="gene"/>
</dbReference>
<dbReference type="neXtProt" id="NX_Q3KRA9"/>
<dbReference type="OpenTargets" id="ENSG00000239382"/>
<dbReference type="PharmGKB" id="PA143485295"/>
<dbReference type="VEuPathDB" id="HostDB:ENSG00000239382"/>
<dbReference type="eggNOG" id="KOG3200">
    <property type="taxonomic scope" value="Eukaryota"/>
</dbReference>
<dbReference type="GeneTree" id="ENSGT00510000048626"/>
<dbReference type="HOGENOM" id="CLU_059836_2_0_1"/>
<dbReference type="InParanoid" id="Q3KRA9"/>
<dbReference type="OrthoDB" id="412814at2759"/>
<dbReference type="PAN-GO" id="Q3KRA9">
    <property type="GO annotations" value="1 GO annotation based on evolutionary models"/>
</dbReference>
<dbReference type="PhylomeDB" id="Q3KRA9"/>
<dbReference type="TreeFam" id="TF314467"/>
<dbReference type="PathwayCommons" id="Q3KRA9"/>
<dbReference type="BioGRID-ORCS" id="84964">
    <property type="hits" value="13 hits in 1162 CRISPR screens"/>
</dbReference>
<dbReference type="ChiTaRS" id="ALKBH6">
    <property type="organism name" value="human"/>
</dbReference>
<dbReference type="GenomeRNAi" id="84964"/>
<dbReference type="Pharos" id="Q3KRA9">
    <property type="development level" value="Tdark"/>
</dbReference>
<dbReference type="PRO" id="PR:Q3KRA9"/>
<dbReference type="Proteomes" id="UP000005640">
    <property type="component" value="Chromosome 19"/>
</dbReference>
<dbReference type="RNAct" id="Q3KRA9">
    <property type="molecule type" value="protein"/>
</dbReference>
<dbReference type="Bgee" id="ENSG00000239382">
    <property type="expression patterns" value="Expressed in lateral nuclear group of thalamus and 170 other cell types or tissues"/>
</dbReference>
<dbReference type="ExpressionAtlas" id="Q3KRA9">
    <property type="expression patterns" value="baseline and differential"/>
</dbReference>
<dbReference type="GO" id="GO:0005737">
    <property type="term" value="C:cytoplasm"/>
    <property type="evidence" value="ECO:0007669"/>
    <property type="project" value="UniProtKB-SubCell"/>
</dbReference>
<dbReference type="GO" id="GO:0005925">
    <property type="term" value="C:focal adhesion"/>
    <property type="evidence" value="ECO:0000314"/>
    <property type="project" value="HPA"/>
</dbReference>
<dbReference type="GO" id="GO:0005654">
    <property type="term" value="C:nucleoplasm"/>
    <property type="evidence" value="ECO:0000314"/>
    <property type="project" value="HPA"/>
</dbReference>
<dbReference type="GO" id="GO:0005634">
    <property type="term" value="C:nucleus"/>
    <property type="evidence" value="ECO:0000318"/>
    <property type="project" value="GO_Central"/>
</dbReference>
<dbReference type="GO" id="GO:0051213">
    <property type="term" value="F:dioxygenase activity"/>
    <property type="evidence" value="ECO:0007669"/>
    <property type="project" value="UniProtKB-KW"/>
</dbReference>
<dbReference type="GO" id="GO:0046872">
    <property type="term" value="F:metal ion binding"/>
    <property type="evidence" value="ECO:0007669"/>
    <property type="project" value="UniProtKB-KW"/>
</dbReference>
<dbReference type="FunFam" id="2.60.120.590:FF:000007">
    <property type="entry name" value="Alpha-ketoglutarate-dependent dioxygenase alkB homolog 6"/>
    <property type="match status" value="1"/>
</dbReference>
<dbReference type="Gene3D" id="2.60.120.590">
    <property type="entry name" value="Alpha-ketoglutarate-dependent dioxygenase AlkB-like"/>
    <property type="match status" value="1"/>
</dbReference>
<dbReference type="InterPro" id="IPR027450">
    <property type="entry name" value="AlkB-like"/>
</dbReference>
<dbReference type="InterPro" id="IPR037151">
    <property type="entry name" value="AlkB-like_sf"/>
</dbReference>
<dbReference type="InterPro" id="IPR032862">
    <property type="entry name" value="ALKBH6"/>
</dbReference>
<dbReference type="InterPro" id="IPR005123">
    <property type="entry name" value="Oxoglu/Fe-dep_dioxygenase_dom"/>
</dbReference>
<dbReference type="PANTHER" id="PTHR46030">
    <property type="entry name" value="ALPHA-KETOGLUTARATE-DEPENDENT DIOXYGENASE ALKB HOMOLOG 6"/>
    <property type="match status" value="1"/>
</dbReference>
<dbReference type="PANTHER" id="PTHR46030:SF1">
    <property type="entry name" value="ALPHA-KETOGLUTARATE-DEPENDENT DIOXYGENASE ALKB HOMOLOG 6"/>
    <property type="match status" value="1"/>
</dbReference>
<dbReference type="Pfam" id="PF13532">
    <property type="entry name" value="2OG-FeII_Oxy_2"/>
    <property type="match status" value="1"/>
</dbReference>
<dbReference type="SUPFAM" id="SSF51197">
    <property type="entry name" value="Clavaminate synthase-like"/>
    <property type="match status" value="1"/>
</dbReference>
<dbReference type="PROSITE" id="PS51471">
    <property type="entry name" value="FE2OG_OXY"/>
    <property type="match status" value="1"/>
</dbReference>
<feature type="chain" id="PRO_0000323716" description="Probable RNA/DNA demethylase ALKBH6">
    <location>
        <begin position="1"/>
        <end position="238"/>
    </location>
</feature>
<feature type="domain" description="Fe2OG dioxygenase" evidence="1">
    <location>
        <begin position="96"/>
        <end position="227"/>
    </location>
</feature>
<feature type="region of interest" description="Disordered" evidence="2">
    <location>
        <begin position="138"/>
        <end position="161"/>
    </location>
</feature>
<feature type="binding site" evidence="5 14">
    <location>
        <position position="103"/>
    </location>
    <ligand>
        <name>2-oxoglutarate</name>
        <dbReference type="ChEBI" id="CHEBI:16810"/>
    </ligand>
</feature>
<feature type="binding site" evidence="5 14">
    <location>
        <position position="105"/>
    </location>
    <ligand>
        <name>2-oxoglutarate</name>
        <dbReference type="ChEBI" id="CHEBI:16810"/>
    </ligand>
</feature>
<feature type="binding site" evidence="11">
    <location>
        <position position="114"/>
    </location>
    <ligand>
        <name>Fe cation</name>
        <dbReference type="ChEBI" id="CHEBI:24875"/>
        <note>catalytic</note>
    </ligand>
</feature>
<feature type="binding site" evidence="11">
    <location>
        <position position="116"/>
    </location>
    <ligand>
        <name>Fe cation</name>
        <dbReference type="ChEBI" id="CHEBI:24875"/>
        <note>catalytic</note>
    </ligand>
</feature>
<feature type="binding site" evidence="11">
    <location>
        <position position="182"/>
    </location>
    <ligand>
        <name>Fe cation</name>
        <dbReference type="ChEBI" id="CHEBI:24875"/>
        <note>catalytic</note>
    </ligand>
</feature>
<feature type="binding site" evidence="5 14">
    <location>
        <position position="218"/>
    </location>
    <ligand>
        <name>2-oxoglutarate</name>
        <dbReference type="ChEBI" id="CHEBI:16810"/>
    </ligand>
</feature>
<feature type="binding site" evidence="5 14">
    <location>
        <position position="220"/>
    </location>
    <ligand>
        <name>2-oxoglutarate</name>
        <dbReference type="ChEBI" id="CHEBI:16810"/>
    </ligand>
</feature>
<feature type="splice variant" id="VSP_032056" description="In isoform 2 and isoform 3." evidence="7 8">
    <original>M</original>
    <variation>MAGRGMGMLNLEIGGDAGGRIGCKELVLM</variation>
    <location>
        <position position="1"/>
    </location>
</feature>
<feature type="splice variant" id="VSP_032057" description="In isoform 3." evidence="7">
    <original>LPHPRGMVPERLPPWLQRYVDKVSNLSLFGGLPANHVLVNQYLPGEGIMPHEDGPLYYPTVSTISLGSHTVLDFYEPRRPEDDDPTEQPRPPPRPTTSLLLEPRSLLVLRGPAYTRLLHGIAAARVDALDAASSPPNAAACPSARPGACLVRGTRVSLTIRRVPRVLRAGLLLGK</original>
    <variation>PSGPHCLPQVGFLIPEGWFLSGCPHGSSATWTKCQTSASLEASQLTMSS</variation>
    <location>
        <begin position="64"/>
        <end position="238"/>
    </location>
</feature>
<feature type="mutagenesis site" description="Almost completely abolished the ssDNA binding activity." evidence="5">
    <original>R</original>
    <variation>A</variation>
    <location>
        <position position="68"/>
    </location>
</feature>
<feature type="mutagenesis site" description="Almost completely abolished the ssDNA binding activity." evidence="5">
    <original>R</original>
    <variation>A</variation>
    <location>
        <position position="74"/>
    </location>
</feature>
<feature type="mutagenesis site" description="Reduces the binding of 2-oxoglutarate; when associated with A-105 and A-218." evidence="5">
    <original>N</original>
    <variation>A</variation>
    <location>
        <position position="103"/>
    </location>
</feature>
<feature type="mutagenesis site" description="Reduces the binding of 2-oxoglutarate; when associated with A-103 and A-218." evidence="5">
    <original>Y</original>
    <variation>A</variation>
    <location>
        <position position="105"/>
    </location>
</feature>
<feature type="mutagenesis site" description="Reduces the binding of 2-oxoglutarate; when associated with A-103 and A-105." evidence="5">
    <original>R</original>
    <variation>A</variation>
    <location>
        <position position="218"/>
    </location>
</feature>
<feature type="helix" evidence="15">
    <location>
        <begin position="2"/>
        <end position="6"/>
    </location>
</feature>
<feature type="helix" evidence="15">
    <location>
        <begin position="9"/>
        <end position="14"/>
    </location>
</feature>
<feature type="strand" evidence="15">
    <location>
        <begin position="19"/>
        <end position="26"/>
    </location>
</feature>
<feature type="helix" evidence="15">
    <location>
        <begin position="32"/>
        <end position="43"/>
    </location>
</feature>
<feature type="helix" evidence="15">
    <location>
        <begin position="47"/>
        <end position="49"/>
    </location>
</feature>
<feature type="strand" evidence="15">
    <location>
        <begin position="50"/>
        <end position="52"/>
    </location>
</feature>
<feature type="strand" evidence="15">
    <location>
        <begin position="57"/>
        <end position="63"/>
    </location>
</feature>
<feature type="helix" evidence="15">
    <location>
        <begin position="77"/>
        <end position="87"/>
    </location>
</feature>
<feature type="turn" evidence="15">
    <location>
        <begin position="88"/>
        <end position="90"/>
    </location>
</feature>
<feature type="strand" evidence="15">
    <location>
        <begin position="99"/>
        <end position="105"/>
    </location>
</feature>
<feature type="strand" evidence="15">
    <location>
        <begin position="111"/>
        <end position="114"/>
    </location>
</feature>
<feature type="strand" evidence="15">
    <location>
        <begin position="122"/>
        <end position="131"/>
    </location>
</feature>
<feature type="strand" evidence="15">
    <location>
        <begin position="133"/>
        <end position="138"/>
    </location>
</feature>
<feature type="helix" evidence="15">
    <location>
        <begin position="143"/>
        <end position="145"/>
    </location>
</feature>
<feature type="strand" evidence="15">
    <location>
        <begin position="159"/>
        <end position="164"/>
    </location>
</feature>
<feature type="strand" evidence="15">
    <location>
        <begin position="169"/>
        <end position="173"/>
    </location>
</feature>
<feature type="helix" evidence="15">
    <location>
        <begin position="175"/>
        <end position="178"/>
    </location>
</feature>
<feature type="strand" evidence="15">
    <location>
        <begin position="181"/>
        <end position="184"/>
    </location>
</feature>
<feature type="strand" evidence="15">
    <location>
        <begin position="188"/>
        <end position="191"/>
    </location>
</feature>
<feature type="strand" evidence="15">
    <location>
        <begin position="212"/>
        <end position="214"/>
    </location>
</feature>
<feature type="strand" evidence="15">
    <location>
        <begin position="218"/>
        <end position="224"/>
    </location>
</feature>
<comment type="function">
    <text evidence="5 6">Probable Fe(2+)/2-oxoglutarate-dependent dioxygenase involved in oxidative demethylation of nucleic acids (PubMed:39845104). Binds nucleic acids with a preference for ssDNA or ssRNA to other types of DNAs (PubMed:35120926). May play a role in nucleic acid damage repair (PubMed:35120926).</text>
</comment>
<comment type="cofactor">
    <cofactor evidence="1">
        <name>Fe(2+)</name>
        <dbReference type="ChEBI" id="CHEBI:29033"/>
    </cofactor>
    <text evidence="1">Binds 1 Fe(2+) ion per subunit.</text>
</comment>
<comment type="subunit">
    <text evidence="4">Interacts with VCPKMT.</text>
</comment>
<comment type="subcellular location">
    <subcellularLocation>
        <location evidence="3">Cytoplasm</location>
    </subcellularLocation>
    <subcellularLocation>
        <location evidence="3">Nucleus</location>
    </subcellularLocation>
</comment>
<comment type="alternative products">
    <event type="alternative splicing"/>
    <isoform>
        <id>Q3KRA9-1</id>
        <name>1</name>
        <sequence type="displayed"/>
    </isoform>
    <isoform>
        <id>Q3KRA9-2</id>
        <name>2</name>
        <sequence type="described" ref="VSP_032056"/>
    </isoform>
    <isoform>
        <id>Q3KRA9-3</id>
        <name>3</name>
        <sequence type="described" ref="VSP_032056 VSP_032057"/>
    </isoform>
</comment>
<comment type="tissue specificity">
    <text evidence="3">Widely expressed, with highest expression in testis and pancreas.</text>
</comment>
<comment type="similarity">
    <text evidence="10">Belongs to the alkB family.</text>
</comment>
<comment type="sequence caution" evidence="10">
    <conflict type="erroneous initiation">
        <sequence resource="EMBL-CDS" id="AAI05802"/>
    </conflict>
</comment>
<evidence type="ECO:0000255" key="1">
    <source>
        <dbReference type="PROSITE-ProRule" id="PRU00805"/>
    </source>
</evidence>
<evidence type="ECO:0000256" key="2">
    <source>
        <dbReference type="SAM" id="MobiDB-lite"/>
    </source>
</evidence>
<evidence type="ECO:0000269" key="3">
    <source>
    </source>
</evidence>
<evidence type="ECO:0000269" key="4">
    <source>
    </source>
</evidence>
<evidence type="ECO:0000269" key="5">
    <source>
    </source>
</evidence>
<evidence type="ECO:0000269" key="6">
    <source>
    </source>
</evidence>
<evidence type="ECO:0000303" key="7">
    <source>
    </source>
</evidence>
<evidence type="ECO:0000303" key="8">
    <source>
    </source>
</evidence>
<evidence type="ECO:0000303" key="9">
    <source>
    </source>
</evidence>
<evidence type="ECO:0000305" key="10"/>
<evidence type="ECO:0000305" key="11">
    <source>
    </source>
</evidence>
<evidence type="ECO:0000312" key="12">
    <source>
        <dbReference type="HGNC" id="HGNC:28243"/>
    </source>
</evidence>
<evidence type="ECO:0007744" key="13">
    <source>
        <dbReference type="PDB" id="7VJS"/>
    </source>
</evidence>
<evidence type="ECO:0007744" key="14">
    <source>
        <dbReference type="PDB" id="7VJV"/>
    </source>
</evidence>
<evidence type="ECO:0007829" key="15">
    <source>
        <dbReference type="PDB" id="7VJV"/>
    </source>
</evidence>
<keyword id="KW-0002">3D-structure</keyword>
<keyword id="KW-0025">Alternative splicing</keyword>
<keyword id="KW-0963">Cytoplasm</keyword>
<keyword id="KW-0223">Dioxygenase</keyword>
<keyword id="KW-0408">Iron</keyword>
<keyword id="KW-0479">Metal-binding</keyword>
<keyword id="KW-0539">Nucleus</keyword>
<keyword id="KW-0560">Oxidoreductase</keyword>
<keyword id="KW-1267">Proteomics identification</keyword>
<keyword id="KW-1185">Reference proteome</keyword>
<organism>
    <name type="scientific">Homo sapiens</name>
    <name type="common">Human</name>
    <dbReference type="NCBI Taxonomy" id="9606"/>
    <lineage>
        <taxon>Eukaryota</taxon>
        <taxon>Metazoa</taxon>
        <taxon>Chordata</taxon>
        <taxon>Craniata</taxon>
        <taxon>Vertebrata</taxon>
        <taxon>Euteleostomi</taxon>
        <taxon>Mammalia</taxon>
        <taxon>Eutheria</taxon>
        <taxon>Euarchontoglires</taxon>
        <taxon>Primates</taxon>
        <taxon>Haplorrhini</taxon>
        <taxon>Catarrhini</taxon>
        <taxon>Hominidae</taxon>
        <taxon>Homo</taxon>
    </lineage>
</organism>
<reference key="1">
    <citation type="journal article" date="2007" name="J. Cell. Mol. Med.">
        <title>Expression and sub-cellular localization of human ABH family molecules.</title>
        <authorList>
            <person name="Tsujikawa K."/>
            <person name="Koike K."/>
            <person name="Kitae K."/>
            <person name="Shinkawa A."/>
            <person name="Arima H."/>
            <person name="Suzuki T."/>
            <person name="Tsuchiya M."/>
            <person name="Makino Y."/>
            <person name="Furukawa T."/>
            <person name="Konishi N."/>
            <person name="Yamamoto H."/>
        </authorList>
    </citation>
    <scope>NUCLEOTIDE SEQUENCE [MRNA] (ISOFORM 1)</scope>
    <scope>SUBCELLULAR LOCATION</scope>
    <scope>TISSUE SPECIFICITY</scope>
    <source>
        <tissue>Testis</tissue>
    </source>
</reference>
<reference key="2">
    <citation type="journal article" date="2004" name="Nature">
        <title>The DNA sequence and biology of human chromosome 19.</title>
        <authorList>
            <person name="Grimwood J."/>
            <person name="Gordon L.A."/>
            <person name="Olsen A.S."/>
            <person name="Terry A."/>
            <person name="Schmutz J."/>
            <person name="Lamerdin J.E."/>
            <person name="Hellsten U."/>
            <person name="Goodstein D."/>
            <person name="Couronne O."/>
            <person name="Tran-Gyamfi M."/>
            <person name="Aerts A."/>
            <person name="Altherr M."/>
            <person name="Ashworth L."/>
            <person name="Bajorek E."/>
            <person name="Black S."/>
            <person name="Branscomb E."/>
            <person name="Caenepeel S."/>
            <person name="Carrano A.V."/>
            <person name="Caoile C."/>
            <person name="Chan Y.M."/>
            <person name="Christensen M."/>
            <person name="Cleland C.A."/>
            <person name="Copeland A."/>
            <person name="Dalin E."/>
            <person name="Dehal P."/>
            <person name="Denys M."/>
            <person name="Detter J.C."/>
            <person name="Escobar J."/>
            <person name="Flowers D."/>
            <person name="Fotopulos D."/>
            <person name="Garcia C."/>
            <person name="Georgescu A.M."/>
            <person name="Glavina T."/>
            <person name="Gomez M."/>
            <person name="Gonzales E."/>
            <person name="Groza M."/>
            <person name="Hammon N."/>
            <person name="Hawkins T."/>
            <person name="Haydu L."/>
            <person name="Ho I."/>
            <person name="Huang W."/>
            <person name="Israni S."/>
            <person name="Jett J."/>
            <person name="Kadner K."/>
            <person name="Kimball H."/>
            <person name="Kobayashi A."/>
            <person name="Larionov V."/>
            <person name="Leem S.-H."/>
            <person name="Lopez F."/>
            <person name="Lou Y."/>
            <person name="Lowry S."/>
            <person name="Malfatti S."/>
            <person name="Martinez D."/>
            <person name="McCready P.M."/>
            <person name="Medina C."/>
            <person name="Morgan J."/>
            <person name="Nelson K."/>
            <person name="Nolan M."/>
            <person name="Ovcharenko I."/>
            <person name="Pitluck S."/>
            <person name="Pollard M."/>
            <person name="Popkie A.P."/>
            <person name="Predki P."/>
            <person name="Quan G."/>
            <person name="Ramirez L."/>
            <person name="Rash S."/>
            <person name="Retterer J."/>
            <person name="Rodriguez A."/>
            <person name="Rogers S."/>
            <person name="Salamov A."/>
            <person name="Salazar A."/>
            <person name="She X."/>
            <person name="Smith D."/>
            <person name="Slezak T."/>
            <person name="Solovyev V."/>
            <person name="Thayer N."/>
            <person name="Tice H."/>
            <person name="Tsai M."/>
            <person name="Ustaszewska A."/>
            <person name="Vo N."/>
            <person name="Wagner M."/>
            <person name="Wheeler J."/>
            <person name="Wu K."/>
            <person name="Xie G."/>
            <person name="Yang J."/>
            <person name="Dubchak I."/>
            <person name="Furey T.S."/>
            <person name="DeJong P."/>
            <person name="Dickson M."/>
            <person name="Gordon D."/>
            <person name="Eichler E.E."/>
            <person name="Pennacchio L.A."/>
            <person name="Richardson P."/>
            <person name="Stubbs L."/>
            <person name="Rokhsar D.S."/>
            <person name="Myers R.M."/>
            <person name="Rubin E.M."/>
            <person name="Lucas S.M."/>
        </authorList>
    </citation>
    <scope>NUCLEOTIDE SEQUENCE [LARGE SCALE GENOMIC DNA]</scope>
</reference>
<reference key="3">
    <citation type="journal article" date="2004" name="Nat. Genet.">
        <title>Complete sequencing and characterization of 21,243 full-length human cDNAs.</title>
        <authorList>
            <person name="Ota T."/>
            <person name="Suzuki Y."/>
            <person name="Nishikawa T."/>
            <person name="Otsuki T."/>
            <person name="Sugiyama T."/>
            <person name="Irie R."/>
            <person name="Wakamatsu A."/>
            <person name="Hayashi K."/>
            <person name="Sato H."/>
            <person name="Nagai K."/>
            <person name="Kimura K."/>
            <person name="Makita H."/>
            <person name="Sekine M."/>
            <person name="Obayashi M."/>
            <person name="Nishi T."/>
            <person name="Shibahara T."/>
            <person name="Tanaka T."/>
            <person name="Ishii S."/>
            <person name="Yamamoto J."/>
            <person name="Saito K."/>
            <person name="Kawai Y."/>
            <person name="Isono Y."/>
            <person name="Nakamura Y."/>
            <person name="Nagahari K."/>
            <person name="Murakami K."/>
            <person name="Yasuda T."/>
            <person name="Iwayanagi T."/>
            <person name="Wagatsuma M."/>
            <person name="Shiratori A."/>
            <person name="Sudo H."/>
            <person name="Hosoiri T."/>
            <person name="Kaku Y."/>
            <person name="Kodaira H."/>
            <person name="Kondo H."/>
            <person name="Sugawara M."/>
            <person name="Takahashi M."/>
            <person name="Kanda K."/>
            <person name="Yokoi T."/>
            <person name="Furuya T."/>
            <person name="Kikkawa E."/>
            <person name="Omura Y."/>
            <person name="Abe K."/>
            <person name="Kamihara K."/>
            <person name="Katsuta N."/>
            <person name="Sato K."/>
            <person name="Tanikawa M."/>
            <person name="Yamazaki M."/>
            <person name="Ninomiya K."/>
            <person name="Ishibashi T."/>
            <person name="Yamashita H."/>
            <person name="Murakawa K."/>
            <person name="Fujimori K."/>
            <person name="Tanai H."/>
            <person name="Kimata M."/>
            <person name="Watanabe M."/>
            <person name="Hiraoka S."/>
            <person name="Chiba Y."/>
            <person name="Ishida S."/>
            <person name="Ono Y."/>
            <person name="Takiguchi S."/>
            <person name="Watanabe S."/>
            <person name="Yosida M."/>
            <person name="Hotuta T."/>
            <person name="Kusano J."/>
            <person name="Kanehori K."/>
            <person name="Takahashi-Fujii A."/>
            <person name="Hara H."/>
            <person name="Tanase T.-O."/>
            <person name="Nomura Y."/>
            <person name="Togiya S."/>
            <person name="Komai F."/>
            <person name="Hara R."/>
            <person name="Takeuchi K."/>
            <person name="Arita M."/>
            <person name="Imose N."/>
            <person name="Musashino K."/>
            <person name="Yuuki H."/>
            <person name="Oshima A."/>
            <person name="Sasaki N."/>
            <person name="Aotsuka S."/>
            <person name="Yoshikawa Y."/>
            <person name="Matsunawa H."/>
            <person name="Ichihara T."/>
            <person name="Shiohata N."/>
            <person name="Sano S."/>
            <person name="Moriya S."/>
            <person name="Momiyama H."/>
            <person name="Satoh N."/>
            <person name="Takami S."/>
            <person name="Terashima Y."/>
            <person name="Suzuki O."/>
            <person name="Nakagawa S."/>
            <person name="Senoh A."/>
            <person name="Mizoguchi H."/>
            <person name="Goto Y."/>
            <person name="Shimizu F."/>
            <person name="Wakebe H."/>
            <person name="Hishigaki H."/>
            <person name="Watanabe T."/>
            <person name="Sugiyama A."/>
            <person name="Takemoto M."/>
            <person name="Kawakami B."/>
            <person name="Yamazaki M."/>
            <person name="Watanabe K."/>
            <person name="Kumagai A."/>
            <person name="Itakura S."/>
            <person name="Fukuzumi Y."/>
            <person name="Fujimori Y."/>
            <person name="Komiyama M."/>
            <person name="Tashiro H."/>
            <person name="Tanigami A."/>
            <person name="Fujiwara T."/>
            <person name="Ono T."/>
            <person name="Yamada K."/>
            <person name="Fujii Y."/>
            <person name="Ozaki K."/>
            <person name="Hirao M."/>
            <person name="Ohmori Y."/>
            <person name="Kawabata A."/>
            <person name="Hikiji T."/>
            <person name="Kobatake N."/>
            <person name="Inagaki H."/>
            <person name="Ikema Y."/>
            <person name="Okamoto S."/>
            <person name="Okitani R."/>
            <person name="Kawakami T."/>
            <person name="Noguchi S."/>
            <person name="Itoh T."/>
            <person name="Shigeta K."/>
            <person name="Senba T."/>
            <person name="Matsumura K."/>
            <person name="Nakajima Y."/>
            <person name="Mizuno T."/>
            <person name="Morinaga M."/>
            <person name="Sasaki M."/>
            <person name="Togashi T."/>
            <person name="Oyama M."/>
            <person name="Hata H."/>
            <person name="Watanabe M."/>
            <person name="Komatsu T."/>
            <person name="Mizushima-Sugano J."/>
            <person name="Satoh T."/>
            <person name="Shirai Y."/>
            <person name="Takahashi Y."/>
            <person name="Nakagawa K."/>
            <person name="Okumura K."/>
            <person name="Nagase T."/>
            <person name="Nomura N."/>
            <person name="Kikuchi H."/>
            <person name="Masuho Y."/>
            <person name="Yamashita R."/>
            <person name="Nakai K."/>
            <person name="Yada T."/>
            <person name="Nakamura Y."/>
            <person name="Ohara O."/>
            <person name="Isogai T."/>
            <person name="Sugano S."/>
        </authorList>
    </citation>
    <scope>NUCLEOTIDE SEQUENCE [LARGE SCALE MRNA] (ISOFORM 3)</scope>
    <source>
        <tissue>Testis</tissue>
    </source>
</reference>
<reference key="4">
    <citation type="journal article" date="2004" name="Genome Res.">
        <title>The status, quality, and expansion of the NIH full-length cDNA project: the Mammalian Gene Collection (MGC).</title>
        <authorList>
            <consortium name="The MGC Project Team"/>
        </authorList>
    </citation>
    <scope>NUCLEOTIDE SEQUENCE [LARGE SCALE MRNA] OF 9-238 (ISOFORM 2)</scope>
    <source>
        <tissue>Urinary bladder</tissue>
    </source>
</reference>
<reference key="5">
    <citation type="journal article" date="2010" name="Sci. Signal.">
        <title>Quantitative phosphoproteomics reveals widespread full phosphorylation site occupancy during mitosis.</title>
        <authorList>
            <person name="Olsen J.V."/>
            <person name="Vermeulen M."/>
            <person name="Santamaria A."/>
            <person name="Kumar C."/>
            <person name="Miller M.L."/>
            <person name="Jensen L.J."/>
            <person name="Gnad F."/>
            <person name="Cox J."/>
            <person name="Jensen T.S."/>
            <person name="Nigg E.A."/>
            <person name="Brunak S."/>
            <person name="Mann M."/>
        </authorList>
    </citation>
    <scope>IDENTIFICATION BY MASS SPECTROMETRY [LARGE SCALE ANALYSIS]</scope>
    <source>
        <tissue>Cervix carcinoma</tissue>
    </source>
</reference>
<reference key="6">
    <citation type="journal article" date="2012" name="Nat. Commun.">
        <title>Lysine methylation of VCP by a member of a novel human protein methyltransferase family.</title>
        <authorList>
            <person name="Kernstock S."/>
            <person name="Davydova E."/>
            <person name="Jakobsson M."/>
            <person name="Moen A."/>
            <person name="Pettersen S."/>
            <person name="Maelandsmo G.M."/>
            <person name="Egge-Jacobsen W."/>
            <person name="Falnes P.O."/>
        </authorList>
    </citation>
    <scope>INTERACTION WITH VCPKMT</scope>
</reference>
<reference evidence="13 14" key="7">
    <citation type="journal article" date="2022" name="J. Biol. Chem.">
        <title>Structural insights into the interactions and epigenetic functions of human nucleic acid repair protein ALKBH6.</title>
        <authorList>
            <person name="Ma L."/>
            <person name="Lu H."/>
            <person name="Tian Z."/>
            <person name="Yang M."/>
            <person name="Ma J."/>
            <person name="Shang G."/>
            <person name="Liu Y."/>
            <person name="Xie M."/>
            <person name="Wang G."/>
            <person name="Wu W."/>
            <person name="Zhang Z."/>
            <person name="Dai S."/>
            <person name="Chen Z."/>
        </authorList>
    </citation>
    <scope>X-RAY CRYSTALLOGRAPHY (1.75 ANGSTROMS) IN COMPLEX WITH 2-OXOGLUTARATE AND MN(2+)</scope>
    <scope>SUBUNIT</scope>
    <scope>MUTAGENESIS OF ARG-68; ARG-74; ASN-103; TYR-105 AND ARG-218</scope>
</reference>
<reference key="8">
    <citation type="journal article" date="2025" name="Biol. Methods Protoc.">
        <title>Functional and comparative analysis of the FeII/2-oxoglutarate-dependent dioxygenases without using any substrate.</title>
        <authorList>
            <person name="Das S."/>
            <person name="Shahnaz N."/>
            <person name="Keerthana C."/>
            <person name="Ranjan S."/>
            <person name="Seenivasan G."/>
            <person name="Tuti N."/>
            <person name="Shaji U.P."/>
            <person name="Meur G."/>
            <person name="Anindya R."/>
        </authorList>
    </citation>
    <scope>FUNCTION</scope>
    <scope>CATALYTIC ACTIVITY</scope>
</reference>